<dbReference type="EMBL" id="CP000644">
    <property type="protein sequence ID" value="ABO90352.1"/>
    <property type="molecule type" value="Genomic_DNA"/>
</dbReference>
<dbReference type="RefSeq" id="WP_005310998.1">
    <property type="nucleotide sequence ID" value="NC_009348.1"/>
</dbReference>
<dbReference type="SMR" id="A4SN80"/>
<dbReference type="STRING" id="29491.GCA_000820065_01626"/>
<dbReference type="GeneID" id="79880051"/>
<dbReference type="KEGG" id="asa:ASA_2302"/>
<dbReference type="eggNOG" id="COG3067">
    <property type="taxonomic scope" value="Bacteria"/>
</dbReference>
<dbReference type="HOGENOM" id="CLU_041110_0_0_6"/>
<dbReference type="Proteomes" id="UP000000225">
    <property type="component" value="Chromosome"/>
</dbReference>
<dbReference type="GO" id="GO:0005886">
    <property type="term" value="C:plasma membrane"/>
    <property type="evidence" value="ECO:0007669"/>
    <property type="project" value="UniProtKB-SubCell"/>
</dbReference>
<dbReference type="GO" id="GO:0015385">
    <property type="term" value="F:sodium:proton antiporter activity"/>
    <property type="evidence" value="ECO:0007669"/>
    <property type="project" value="InterPro"/>
</dbReference>
<dbReference type="HAMAP" id="MF_01599">
    <property type="entry name" value="NhaB"/>
    <property type="match status" value="1"/>
</dbReference>
<dbReference type="InterPro" id="IPR004671">
    <property type="entry name" value="Na+/H+_antiporter_NhaB"/>
</dbReference>
<dbReference type="NCBIfam" id="TIGR00774">
    <property type="entry name" value="NhaB"/>
    <property type="match status" value="1"/>
</dbReference>
<dbReference type="NCBIfam" id="NF007093">
    <property type="entry name" value="PRK09547.1"/>
    <property type="match status" value="1"/>
</dbReference>
<dbReference type="PANTHER" id="PTHR43302:SF1">
    <property type="entry name" value="NA(+)_H(+) ANTIPORTER NHAB"/>
    <property type="match status" value="1"/>
</dbReference>
<dbReference type="PANTHER" id="PTHR43302">
    <property type="entry name" value="TRANSPORTER ARSB-RELATED"/>
    <property type="match status" value="1"/>
</dbReference>
<dbReference type="Pfam" id="PF06450">
    <property type="entry name" value="NhaB"/>
    <property type="match status" value="1"/>
</dbReference>
<proteinExistence type="inferred from homology"/>
<protein>
    <recommendedName>
        <fullName evidence="1">Na(+)/H(+) antiporter NhaB</fullName>
    </recommendedName>
    <alternativeName>
        <fullName evidence="1">Sodium/proton antiporter NhaB</fullName>
    </alternativeName>
</protein>
<feature type="chain" id="PRO_0000333083" description="Na(+)/H(+) antiporter NhaB">
    <location>
        <begin position="1"/>
        <end position="526"/>
    </location>
</feature>
<feature type="transmembrane region" description="Helical" evidence="1">
    <location>
        <begin position="25"/>
        <end position="45"/>
    </location>
</feature>
<feature type="transmembrane region" description="Helical" evidence="1">
    <location>
        <begin position="52"/>
        <end position="72"/>
    </location>
</feature>
<feature type="transmembrane region" description="Helical" evidence="1">
    <location>
        <begin position="89"/>
        <end position="109"/>
    </location>
</feature>
<feature type="transmembrane region" description="Helical" evidence="1">
    <location>
        <begin position="130"/>
        <end position="164"/>
    </location>
</feature>
<feature type="transmembrane region" description="Helical" evidence="1">
    <location>
        <begin position="204"/>
        <end position="224"/>
    </location>
</feature>
<feature type="transmembrane region" description="Helical" evidence="1">
    <location>
        <begin position="242"/>
        <end position="262"/>
    </location>
</feature>
<feature type="transmembrane region" description="Helical" evidence="1">
    <location>
        <begin position="305"/>
        <end position="325"/>
    </location>
</feature>
<feature type="transmembrane region" description="Helical" evidence="1">
    <location>
        <begin position="350"/>
        <end position="370"/>
    </location>
</feature>
<feature type="transmembrane region" description="Helical" evidence="1">
    <location>
        <begin position="391"/>
        <end position="411"/>
    </location>
</feature>
<feature type="transmembrane region" description="Helical" evidence="1">
    <location>
        <begin position="448"/>
        <end position="468"/>
    </location>
</feature>
<feature type="transmembrane region" description="Helical" evidence="1">
    <location>
        <begin position="479"/>
        <end position="499"/>
    </location>
</feature>
<feature type="transmembrane region" description="Helical" evidence="1">
    <location>
        <begin position="505"/>
        <end position="525"/>
    </location>
</feature>
<keyword id="KW-0050">Antiport</keyword>
<keyword id="KW-0997">Cell inner membrane</keyword>
<keyword id="KW-1003">Cell membrane</keyword>
<keyword id="KW-0406">Ion transport</keyword>
<keyword id="KW-0472">Membrane</keyword>
<keyword id="KW-0915">Sodium</keyword>
<keyword id="KW-0739">Sodium transport</keyword>
<keyword id="KW-0812">Transmembrane</keyword>
<keyword id="KW-1133">Transmembrane helix</keyword>
<keyword id="KW-0813">Transport</keyword>
<name>NHAB_AERS4</name>
<sequence>MPISLGNAFAKNFLGNAPKWYKSAILLFLVINPIAFYLDPFAAGWLLVVEFIFTLAMALKCYPLQPGGLLAIEAVLIGMTSAEQVKHELVANIEVLLLLVFMVAGIYFMKQLLLYVFTKLLIRIHSKTLLSLAFCLVSAFLSAFLDALTVIAVVISVATGFYAIYHKVSSGKEFGHQHDHTDDHSVHELSRQHLDDFRAFLRSLMMHAAIGTALGGVCTLVGEPQNLIIGEQAGWSFGEFAIRMAPVTIPVFICGLLTCILVEKCRWFGYGAKLPDAVRHIMEDYNRYEEAGRSPQDKAKLIVQAVIAIWLILGLAMHLAAVGLIGLSVIVLATSLTGINDEHSLGKAFQEALPFTALLAVFFSVVAVIIDQQLFRPVIQWVLAAEPDDQLALFYLANGLLSMVSDNVFVGTVYINEVKTALLNNAINREQFDLLAVAINTGTNLPSVATPNGQAAFLFMLTSALAPLLRLSYGRMVWMALPYTLVLGLVGFFSVELLLGPATEWFYQAGWLLPHSGAPAVLPALH</sequence>
<accession>A4SN80</accession>
<reference key="1">
    <citation type="journal article" date="2008" name="BMC Genomics">
        <title>The genome of Aeromonas salmonicida subsp. salmonicida A449: insights into the evolution of a fish pathogen.</title>
        <authorList>
            <person name="Reith M.E."/>
            <person name="Singh R.K."/>
            <person name="Curtis B."/>
            <person name="Boyd J.M."/>
            <person name="Bouevitch A."/>
            <person name="Kimball J."/>
            <person name="Munholland J."/>
            <person name="Murphy C."/>
            <person name="Sarty D."/>
            <person name="Williams J."/>
            <person name="Nash J.H."/>
            <person name="Johnson S.C."/>
            <person name="Brown L.L."/>
        </authorList>
    </citation>
    <scope>NUCLEOTIDE SEQUENCE [LARGE SCALE GENOMIC DNA]</scope>
    <source>
        <strain>A449</strain>
    </source>
</reference>
<comment type="function">
    <text evidence="1">Na(+)/H(+) antiporter that extrudes sodium in exchange for external protons.</text>
</comment>
<comment type="catalytic activity">
    <reaction evidence="1">
        <text>2 Na(+)(in) + 3 H(+)(out) = 2 Na(+)(out) + 3 H(+)(in)</text>
        <dbReference type="Rhea" id="RHEA:29247"/>
        <dbReference type="ChEBI" id="CHEBI:15378"/>
        <dbReference type="ChEBI" id="CHEBI:29101"/>
    </reaction>
    <physiologicalReaction direction="left-to-right" evidence="1">
        <dbReference type="Rhea" id="RHEA:29248"/>
    </physiologicalReaction>
</comment>
<comment type="subcellular location">
    <subcellularLocation>
        <location evidence="1">Cell inner membrane</location>
        <topology evidence="1">Multi-pass membrane protein</topology>
    </subcellularLocation>
</comment>
<comment type="similarity">
    <text evidence="1">Belongs to the NhaB Na(+)/H(+) (TC 2.A.34) antiporter family.</text>
</comment>
<organism>
    <name type="scientific">Aeromonas salmonicida (strain A449)</name>
    <dbReference type="NCBI Taxonomy" id="382245"/>
    <lineage>
        <taxon>Bacteria</taxon>
        <taxon>Pseudomonadati</taxon>
        <taxon>Pseudomonadota</taxon>
        <taxon>Gammaproteobacteria</taxon>
        <taxon>Aeromonadales</taxon>
        <taxon>Aeromonadaceae</taxon>
        <taxon>Aeromonas</taxon>
    </lineage>
</organism>
<evidence type="ECO:0000255" key="1">
    <source>
        <dbReference type="HAMAP-Rule" id="MF_01599"/>
    </source>
</evidence>
<gene>
    <name evidence="1" type="primary">nhaB</name>
    <name type="ordered locus">ASA_2302</name>
</gene>